<evidence type="ECO:0000255" key="1">
    <source>
        <dbReference type="HAMAP-Rule" id="MF_00269"/>
    </source>
</evidence>
<evidence type="ECO:0000305" key="2"/>
<feature type="chain" id="PRO_0000187876" description="Thiol peroxidase">
    <location>
        <begin position="1"/>
        <end position="165"/>
    </location>
</feature>
<feature type="domain" description="Thioredoxin" evidence="1">
    <location>
        <begin position="18"/>
        <end position="165"/>
    </location>
</feature>
<feature type="active site" description="Cysteine sulfenic acid (-SOH) intermediate" evidence="1">
    <location>
        <position position="60"/>
    </location>
</feature>
<feature type="disulfide bond" description="Redox-active" evidence="1">
    <location>
        <begin position="60"/>
        <end position="94"/>
    </location>
</feature>
<sequence length="165" mass="17532">MAKTHFQGNETATSGELPQVGDNLAEFNLVNTELGEVSSKDFQGRKLVLNIFPSVDTGVCATSVRKFNEAAASLENTTVLCISKDLPFALGRFCSAEGIENVTPVSAFRSTFGEDNGIVLEGSPLKGLLARSVIVVDENGKVAYTQLVDEISTEPDYDAALAALN</sequence>
<keyword id="KW-0049">Antioxidant</keyword>
<keyword id="KW-1015">Disulfide bond</keyword>
<keyword id="KW-0560">Oxidoreductase</keyword>
<keyword id="KW-0575">Peroxidase</keyword>
<keyword id="KW-0676">Redox-active center</keyword>
<keyword id="KW-1185">Reference proteome</keyword>
<protein>
    <recommendedName>
        <fullName evidence="1">Thiol peroxidase</fullName>
        <shortName evidence="1">Tpx</shortName>
        <ecNumber evidence="1">1.11.1.24</ecNumber>
    </recommendedName>
    <alternativeName>
        <fullName evidence="1">Peroxiredoxin tpx</fullName>
        <shortName evidence="1">Prx</shortName>
    </alternativeName>
    <alternativeName>
        <fullName evidence="1">Thioredoxin peroxidase</fullName>
    </alternativeName>
    <alternativeName>
        <fullName evidence="1">Thioredoxin-dependent peroxiredoxin</fullName>
    </alternativeName>
</protein>
<comment type="function">
    <text evidence="1">Thiol-specific peroxidase that catalyzes the reduction of hydrogen peroxide and organic hydroperoxides to water and alcohols, respectively. Plays a role in cell protection against oxidative stress by detoxifying peroxides.</text>
</comment>
<comment type="catalytic activity">
    <reaction evidence="1">
        <text>a hydroperoxide + [thioredoxin]-dithiol = an alcohol + [thioredoxin]-disulfide + H2O</text>
        <dbReference type="Rhea" id="RHEA:62620"/>
        <dbReference type="Rhea" id="RHEA-COMP:10698"/>
        <dbReference type="Rhea" id="RHEA-COMP:10700"/>
        <dbReference type="ChEBI" id="CHEBI:15377"/>
        <dbReference type="ChEBI" id="CHEBI:29950"/>
        <dbReference type="ChEBI" id="CHEBI:30879"/>
        <dbReference type="ChEBI" id="CHEBI:35924"/>
        <dbReference type="ChEBI" id="CHEBI:50058"/>
        <dbReference type="EC" id="1.11.1.24"/>
    </reaction>
</comment>
<comment type="subunit">
    <text evidence="1">Homodimer.</text>
</comment>
<comment type="miscellaneous">
    <text evidence="1">The active site is a conserved redox-active cysteine residue, the peroxidatic cysteine (C(P)), which makes the nucleophilic attack on the peroxide substrate. The peroxide oxidizes the C(P)-SH to cysteine sulfenic acid (C(P)-SOH), which then reacts with another cysteine residue, the resolving cysteine (C(R)), to form a disulfide bridge. The disulfide is subsequently reduced by an appropriate electron donor to complete the catalytic cycle. In this atypical 2-Cys peroxiredoxin, C(R) is present in the same subunit to form an intramolecular disulfide. The disulfide is subsequently reduced by thioredoxin.</text>
</comment>
<comment type="similarity">
    <text evidence="1">Belongs to the peroxiredoxin family. Tpx subfamily.</text>
</comment>
<comment type="sequence caution" evidence="2">
    <conflict type="erroneous initiation">
        <sequence resource="EMBL-CDS" id="CAF19791"/>
    </conflict>
</comment>
<reference key="1">
    <citation type="journal article" date="2003" name="Appl. Microbiol. Biotechnol.">
        <title>The Corynebacterium glutamicum genome: features and impacts on biotechnological processes.</title>
        <authorList>
            <person name="Ikeda M."/>
            <person name="Nakagawa S."/>
        </authorList>
    </citation>
    <scope>NUCLEOTIDE SEQUENCE [LARGE SCALE GENOMIC DNA]</scope>
    <source>
        <strain>ATCC 13032 / DSM 20300 / JCM 1318 / BCRC 11384 / CCUG 27702 / LMG 3730 / NBRC 12168 / NCIMB 10025 / NRRL B-2784 / 534</strain>
    </source>
</reference>
<reference key="2">
    <citation type="journal article" date="2003" name="J. Biotechnol.">
        <title>The complete Corynebacterium glutamicum ATCC 13032 genome sequence and its impact on the production of L-aspartate-derived amino acids and vitamins.</title>
        <authorList>
            <person name="Kalinowski J."/>
            <person name="Bathe B."/>
            <person name="Bartels D."/>
            <person name="Bischoff N."/>
            <person name="Bott M."/>
            <person name="Burkovski A."/>
            <person name="Dusch N."/>
            <person name="Eggeling L."/>
            <person name="Eikmanns B.J."/>
            <person name="Gaigalat L."/>
            <person name="Goesmann A."/>
            <person name="Hartmann M."/>
            <person name="Huthmacher K."/>
            <person name="Kraemer R."/>
            <person name="Linke B."/>
            <person name="McHardy A.C."/>
            <person name="Meyer F."/>
            <person name="Moeckel B."/>
            <person name="Pfefferle W."/>
            <person name="Puehler A."/>
            <person name="Rey D.A."/>
            <person name="Rueckert C."/>
            <person name="Rupp O."/>
            <person name="Sahm H."/>
            <person name="Wendisch V.F."/>
            <person name="Wiegraebe I."/>
            <person name="Tauch A."/>
        </authorList>
    </citation>
    <scope>NUCLEOTIDE SEQUENCE [LARGE SCALE GENOMIC DNA]</scope>
    <source>
        <strain>ATCC 13032 / DSM 20300 / JCM 1318 / BCRC 11384 / CCUG 27702 / LMG 3730 / NBRC 12168 / NCIMB 10025 / NRRL B-2784 / 534</strain>
    </source>
</reference>
<gene>
    <name evidence="1" type="primary">tpx</name>
    <name type="ordered locus">Cgl1086</name>
    <name type="ordered locus">cg1236</name>
</gene>
<organism>
    <name type="scientific">Corynebacterium glutamicum (strain ATCC 13032 / DSM 20300 / JCM 1318 / BCRC 11384 / CCUG 27702 / LMG 3730 / NBRC 12168 / NCIMB 10025 / NRRL B-2784 / 534)</name>
    <dbReference type="NCBI Taxonomy" id="196627"/>
    <lineage>
        <taxon>Bacteria</taxon>
        <taxon>Bacillati</taxon>
        <taxon>Actinomycetota</taxon>
        <taxon>Actinomycetes</taxon>
        <taxon>Mycobacteriales</taxon>
        <taxon>Corynebacteriaceae</taxon>
        <taxon>Corynebacterium</taxon>
    </lineage>
</organism>
<dbReference type="EC" id="1.11.1.24" evidence="1"/>
<dbReference type="EMBL" id="BA000036">
    <property type="protein sequence ID" value="BAB98479.1"/>
    <property type="molecule type" value="Genomic_DNA"/>
</dbReference>
<dbReference type="EMBL" id="BX927151">
    <property type="protein sequence ID" value="CAF19791.1"/>
    <property type="status" value="ALT_INIT"/>
    <property type="molecule type" value="Genomic_DNA"/>
</dbReference>
<dbReference type="RefSeq" id="NP_600314.1">
    <property type="nucleotide sequence ID" value="NC_003450.3"/>
</dbReference>
<dbReference type="RefSeq" id="WP_003858595.1">
    <property type="nucleotide sequence ID" value="NC_006958.1"/>
</dbReference>
<dbReference type="SMR" id="Q8NRG3"/>
<dbReference type="STRING" id="196627.cg1236"/>
<dbReference type="GeneID" id="1019071"/>
<dbReference type="KEGG" id="cgb:cg1236"/>
<dbReference type="KEGG" id="cgl:Cgl1086"/>
<dbReference type="PATRIC" id="fig|196627.13.peg.1065"/>
<dbReference type="eggNOG" id="COG2077">
    <property type="taxonomic scope" value="Bacteria"/>
</dbReference>
<dbReference type="HOGENOM" id="CLU_042529_12_2_11"/>
<dbReference type="OrthoDB" id="9781543at2"/>
<dbReference type="BioCyc" id="CORYNE:G18NG-10658-MONOMER"/>
<dbReference type="Proteomes" id="UP000000582">
    <property type="component" value="Chromosome"/>
</dbReference>
<dbReference type="Proteomes" id="UP000001009">
    <property type="component" value="Chromosome"/>
</dbReference>
<dbReference type="GO" id="GO:0008379">
    <property type="term" value="F:thioredoxin peroxidase activity"/>
    <property type="evidence" value="ECO:0007669"/>
    <property type="project" value="UniProtKB-UniRule"/>
</dbReference>
<dbReference type="CDD" id="cd03014">
    <property type="entry name" value="PRX_Atyp2cys"/>
    <property type="match status" value="1"/>
</dbReference>
<dbReference type="Gene3D" id="3.40.30.10">
    <property type="entry name" value="Glutaredoxin"/>
    <property type="match status" value="1"/>
</dbReference>
<dbReference type="HAMAP" id="MF_00269">
    <property type="entry name" value="Tpx"/>
    <property type="match status" value="1"/>
</dbReference>
<dbReference type="InterPro" id="IPR013740">
    <property type="entry name" value="Redoxin"/>
</dbReference>
<dbReference type="InterPro" id="IPR036249">
    <property type="entry name" value="Thioredoxin-like_sf"/>
</dbReference>
<dbReference type="InterPro" id="IPR013766">
    <property type="entry name" value="Thioredoxin_domain"/>
</dbReference>
<dbReference type="InterPro" id="IPR002065">
    <property type="entry name" value="TPX"/>
</dbReference>
<dbReference type="InterPro" id="IPR018219">
    <property type="entry name" value="Tpx_CS"/>
</dbReference>
<dbReference type="InterPro" id="IPR050455">
    <property type="entry name" value="Tpx_Peroxidase_subfamily"/>
</dbReference>
<dbReference type="NCBIfam" id="NF001808">
    <property type="entry name" value="PRK00522.1"/>
    <property type="match status" value="1"/>
</dbReference>
<dbReference type="PANTHER" id="PTHR43110">
    <property type="entry name" value="THIOL PEROXIDASE"/>
    <property type="match status" value="1"/>
</dbReference>
<dbReference type="PANTHER" id="PTHR43110:SF1">
    <property type="entry name" value="THIOL PEROXIDASE"/>
    <property type="match status" value="1"/>
</dbReference>
<dbReference type="Pfam" id="PF08534">
    <property type="entry name" value="Redoxin"/>
    <property type="match status" value="1"/>
</dbReference>
<dbReference type="SUPFAM" id="SSF52833">
    <property type="entry name" value="Thioredoxin-like"/>
    <property type="match status" value="1"/>
</dbReference>
<dbReference type="PROSITE" id="PS51352">
    <property type="entry name" value="THIOREDOXIN_2"/>
    <property type="match status" value="1"/>
</dbReference>
<dbReference type="PROSITE" id="PS01265">
    <property type="entry name" value="TPX"/>
    <property type="match status" value="1"/>
</dbReference>
<name>TPX_CORGL</name>
<proteinExistence type="inferred from homology"/>
<accession>Q8NRG3</accession>